<evidence type="ECO:0000255" key="1"/>
<evidence type="ECO:0000269" key="2">
    <source>
    </source>
</evidence>
<evidence type="ECO:0000269" key="3">
    <source>
    </source>
</evidence>
<evidence type="ECO:0000303" key="4">
    <source>
    </source>
</evidence>
<evidence type="ECO:0000303" key="5">
    <source>
    </source>
</evidence>
<evidence type="ECO:0000305" key="6"/>
<evidence type="ECO:0000312" key="7">
    <source>
        <dbReference type="EMBL" id="CAN87012.1"/>
    </source>
</evidence>
<keyword id="KW-0878">Amphibian defense peptide</keyword>
<keyword id="KW-0044">Antibiotic</keyword>
<keyword id="KW-0929">Antimicrobial</keyword>
<keyword id="KW-0165">Cleavage on pair of basic residues</keyword>
<keyword id="KW-0903">Direct protein sequencing</keyword>
<keyword id="KW-1015">Disulfide bond</keyword>
<keyword id="KW-0964">Secreted</keyword>
<keyword id="KW-0732">Signal</keyword>
<sequence>MFTTKKSMLLFFFLGTISLSLCEQERGADEDDGVEMTEEEVKRGIMDTVKNVAKNLAGQLLDKLKCKITAC</sequence>
<dbReference type="EMBL" id="AM745090">
    <property type="protein sequence ID" value="CAN87012.1"/>
    <property type="molecule type" value="mRNA"/>
</dbReference>
<dbReference type="SMR" id="A7WNV6"/>
<dbReference type="GO" id="GO:0005576">
    <property type="term" value="C:extracellular region"/>
    <property type="evidence" value="ECO:0007669"/>
    <property type="project" value="UniProtKB-SubCell"/>
</dbReference>
<dbReference type="GO" id="GO:0050829">
    <property type="term" value="P:defense response to Gram-negative bacterium"/>
    <property type="evidence" value="ECO:0007669"/>
    <property type="project" value="UniProtKB-ARBA"/>
</dbReference>
<dbReference type="InterPro" id="IPR012521">
    <property type="entry name" value="Antimicrobial_frog_2"/>
</dbReference>
<dbReference type="InterPro" id="IPR004275">
    <property type="entry name" value="Frog_antimicrobial_propeptide"/>
</dbReference>
<dbReference type="Pfam" id="PF08023">
    <property type="entry name" value="Antimicrobial_2"/>
    <property type="match status" value="1"/>
</dbReference>
<dbReference type="Pfam" id="PF03032">
    <property type="entry name" value="FSAP_sig_propep"/>
    <property type="match status" value="1"/>
</dbReference>
<name>RN2A_LITPA</name>
<comment type="function">
    <text evidence="2">May have antimicrobial activity against the Gram-negative bacterium E.coli.</text>
</comment>
<comment type="subcellular location">
    <subcellularLocation>
        <location evidence="2">Secreted</location>
    </subcellularLocation>
</comment>
<comment type="tissue specificity">
    <text evidence="2">Expressed by the skin glands.</text>
</comment>
<comment type="mass spectrometry"/>
<comment type="similarity">
    <text evidence="1">Belongs to the frog skin active peptide (FSAP) family. Ranatuerin subfamily.</text>
</comment>
<feature type="signal peptide" evidence="1">
    <location>
        <begin position="1"/>
        <end position="22"/>
    </location>
</feature>
<feature type="propeptide" id="PRO_5000271600" evidence="1">
    <location>
        <begin position="23"/>
        <end position="41"/>
    </location>
</feature>
<feature type="peptide" id="PRO_5000271601" description="Ranatuerin-2PLa" evidence="2">
    <location>
        <begin position="44"/>
        <end position="71"/>
    </location>
</feature>
<feature type="disulfide bond" evidence="2">
    <location>
        <begin position="66"/>
        <end position="71"/>
    </location>
</feature>
<accession>A7WNV6</accession>
<protein>
    <recommendedName>
        <fullName evidence="4 5">Ranatuerin-2PLa</fullName>
    </recommendedName>
</protein>
<proteinExistence type="evidence at protein level"/>
<organism>
    <name type="scientific">Lithobates palustris</name>
    <name type="common">Pickerel frog</name>
    <name type="synonym">Rana palustris</name>
    <dbReference type="NCBI Taxonomy" id="298395"/>
    <lineage>
        <taxon>Eukaryota</taxon>
        <taxon>Metazoa</taxon>
        <taxon>Chordata</taxon>
        <taxon>Craniata</taxon>
        <taxon>Vertebrata</taxon>
        <taxon>Euteleostomi</taxon>
        <taxon>Amphibia</taxon>
        <taxon>Batrachia</taxon>
        <taxon>Anura</taxon>
        <taxon>Neobatrachia</taxon>
        <taxon>Ranoidea</taxon>
        <taxon>Ranidae</taxon>
        <taxon>Lithobates</taxon>
    </lineage>
</organism>
<reference evidence="7" key="1">
    <citation type="journal article" date="2007" name="Peptides">
        <title>Rapid identification of precursor cDNAs encoding five structural classes of antimicrobial peptides from pickerel frog (Rana palustris) skin secretion by single step 'shotgun' cloning.</title>
        <authorList>
            <person name="Zhou M."/>
            <person name="Wang L."/>
            <person name="Owens D.E."/>
            <person name="Chen T."/>
            <person name="Walker B."/>
            <person name="Shaw C."/>
        </authorList>
    </citation>
    <scope>NUCLEOTIDE SEQUENCE [MRNA]</scope>
    <source>
        <tissue evidence="3">Skin secretion</tissue>
    </source>
</reference>
<reference evidence="6" key="2">
    <citation type="journal article" date="2000" name="Biochim. Biophys. Acta">
        <title>Multiple antimicrobial peptides and peptides related to bradykinin and neuromedin N isolated from skin secretions of the pickerel frog, Rana palustris.</title>
        <authorList>
            <person name="Basir Y.J."/>
            <person name="Knoop F.C."/>
            <person name="Dulka J."/>
            <person name="Conlon J.M."/>
        </authorList>
    </citation>
    <scope>PROTEIN SEQUENCE OF 44-71</scope>
    <scope>FUNCTION</scope>
    <scope>SUBCELLULAR LOCATION</scope>
    <scope>TISSUE SPECIFICITY</scope>
    <scope>MASS SPECTROMETRY</scope>
    <scope>DISULFIDE BOND</scope>
    <source>
        <tissue evidence="2">Skin secretion</tissue>
    </source>
</reference>